<dbReference type="EC" id="6.1.1.16" evidence="1"/>
<dbReference type="EMBL" id="CP000109">
    <property type="protein sequence ID" value="ABB41519.1"/>
    <property type="molecule type" value="Genomic_DNA"/>
</dbReference>
<dbReference type="SMR" id="Q31H54"/>
<dbReference type="STRING" id="317025.Tcr_0923"/>
<dbReference type="KEGG" id="tcx:Tcr_0923"/>
<dbReference type="eggNOG" id="COG0215">
    <property type="taxonomic scope" value="Bacteria"/>
</dbReference>
<dbReference type="HOGENOM" id="CLU_013528_0_1_6"/>
<dbReference type="OrthoDB" id="9815130at2"/>
<dbReference type="GO" id="GO:0005829">
    <property type="term" value="C:cytosol"/>
    <property type="evidence" value="ECO:0007669"/>
    <property type="project" value="TreeGrafter"/>
</dbReference>
<dbReference type="GO" id="GO:0005524">
    <property type="term" value="F:ATP binding"/>
    <property type="evidence" value="ECO:0007669"/>
    <property type="project" value="UniProtKB-UniRule"/>
</dbReference>
<dbReference type="GO" id="GO:0004817">
    <property type="term" value="F:cysteine-tRNA ligase activity"/>
    <property type="evidence" value="ECO:0007669"/>
    <property type="project" value="UniProtKB-UniRule"/>
</dbReference>
<dbReference type="GO" id="GO:0008270">
    <property type="term" value="F:zinc ion binding"/>
    <property type="evidence" value="ECO:0007669"/>
    <property type="project" value="UniProtKB-UniRule"/>
</dbReference>
<dbReference type="GO" id="GO:0006423">
    <property type="term" value="P:cysteinyl-tRNA aminoacylation"/>
    <property type="evidence" value="ECO:0007669"/>
    <property type="project" value="UniProtKB-UniRule"/>
</dbReference>
<dbReference type="CDD" id="cd07963">
    <property type="entry name" value="Anticodon_Ia_Cys"/>
    <property type="match status" value="1"/>
</dbReference>
<dbReference type="CDD" id="cd00672">
    <property type="entry name" value="CysRS_core"/>
    <property type="match status" value="1"/>
</dbReference>
<dbReference type="FunFam" id="3.40.50.620:FF:000009">
    <property type="entry name" value="Cysteine--tRNA ligase"/>
    <property type="match status" value="1"/>
</dbReference>
<dbReference type="Gene3D" id="1.20.120.1910">
    <property type="entry name" value="Cysteine-tRNA ligase, C-terminal anti-codon recognition domain"/>
    <property type="match status" value="1"/>
</dbReference>
<dbReference type="Gene3D" id="3.40.50.620">
    <property type="entry name" value="HUPs"/>
    <property type="match status" value="1"/>
</dbReference>
<dbReference type="HAMAP" id="MF_00041">
    <property type="entry name" value="Cys_tRNA_synth"/>
    <property type="match status" value="1"/>
</dbReference>
<dbReference type="InterPro" id="IPR015803">
    <property type="entry name" value="Cys-tRNA-ligase"/>
</dbReference>
<dbReference type="InterPro" id="IPR015273">
    <property type="entry name" value="Cys-tRNA-synt_Ia_DALR"/>
</dbReference>
<dbReference type="InterPro" id="IPR024909">
    <property type="entry name" value="Cys-tRNA/MSH_ligase"/>
</dbReference>
<dbReference type="InterPro" id="IPR056411">
    <property type="entry name" value="CysS_C"/>
</dbReference>
<dbReference type="InterPro" id="IPR014729">
    <property type="entry name" value="Rossmann-like_a/b/a_fold"/>
</dbReference>
<dbReference type="InterPro" id="IPR032678">
    <property type="entry name" value="tRNA-synt_1_cat_dom"/>
</dbReference>
<dbReference type="InterPro" id="IPR009080">
    <property type="entry name" value="tRNAsynth_Ia_anticodon-bd"/>
</dbReference>
<dbReference type="NCBIfam" id="TIGR00435">
    <property type="entry name" value="cysS"/>
    <property type="match status" value="1"/>
</dbReference>
<dbReference type="PANTHER" id="PTHR10890:SF3">
    <property type="entry name" value="CYSTEINE--TRNA LIGASE, CYTOPLASMIC"/>
    <property type="match status" value="1"/>
</dbReference>
<dbReference type="PANTHER" id="PTHR10890">
    <property type="entry name" value="CYSTEINYL-TRNA SYNTHETASE"/>
    <property type="match status" value="1"/>
</dbReference>
<dbReference type="Pfam" id="PF23493">
    <property type="entry name" value="CysS_C"/>
    <property type="match status" value="1"/>
</dbReference>
<dbReference type="Pfam" id="PF09190">
    <property type="entry name" value="DALR_2"/>
    <property type="match status" value="1"/>
</dbReference>
<dbReference type="Pfam" id="PF01406">
    <property type="entry name" value="tRNA-synt_1e"/>
    <property type="match status" value="1"/>
</dbReference>
<dbReference type="PRINTS" id="PR00983">
    <property type="entry name" value="TRNASYNTHCYS"/>
</dbReference>
<dbReference type="SMART" id="SM00840">
    <property type="entry name" value="DALR_2"/>
    <property type="match status" value="1"/>
</dbReference>
<dbReference type="SUPFAM" id="SSF47323">
    <property type="entry name" value="Anticodon-binding domain of a subclass of class I aminoacyl-tRNA synthetases"/>
    <property type="match status" value="1"/>
</dbReference>
<dbReference type="SUPFAM" id="SSF52374">
    <property type="entry name" value="Nucleotidylyl transferase"/>
    <property type="match status" value="1"/>
</dbReference>
<evidence type="ECO:0000255" key="1">
    <source>
        <dbReference type="HAMAP-Rule" id="MF_00041"/>
    </source>
</evidence>
<comment type="catalytic activity">
    <reaction evidence="1">
        <text>tRNA(Cys) + L-cysteine + ATP = L-cysteinyl-tRNA(Cys) + AMP + diphosphate</text>
        <dbReference type="Rhea" id="RHEA:17773"/>
        <dbReference type="Rhea" id="RHEA-COMP:9661"/>
        <dbReference type="Rhea" id="RHEA-COMP:9679"/>
        <dbReference type="ChEBI" id="CHEBI:30616"/>
        <dbReference type="ChEBI" id="CHEBI:33019"/>
        <dbReference type="ChEBI" id="CHEBI:35235"/>
        <dbReference type="ChEBI" id="CHEBI:78442"/>
        <dbReference type="ChEBI" id="CHEBI:78517"/>
        <dbReference type="ChEBI" id="CHEBI:456215"/>
        <dbReference type="EC" id="6.1.1.16"/>
    </reaction>
</comment>
<comment type="cofactor">
    <cofactor evidence="1">
        <name>Zn(2+)</name>
        <dbReference type="ChEBI" id="CHEBI:29105"/>
    </cofactor>
    <text evidence="1">Binds 1 zinc ion per subunit.</text>
</comment>
<comment type="subunit">
    <text evidence="1">Monomer.</text>
</comment>
<comment type="subcellular location">
    <subcellularLocation>
        <location evidence="1">Cytoplasm</location>
    </subcellularLocation>
</comment>
<comment type="similarity">
    <text evidence="1">Belongs to the class-I aminoacyl-tRNA synthetase family.</text>
</comment>
<protein>
    <recommendedName>
        <fullName evidence="1">Cysteine--tRNA ligase</fullName>
        <ecNumber evidence="1">6.1.1.16</ecNumber>
    </recommendedName>
    <alternativeName>
        <fullName evidence="1">Cysteinyl-tRNA synthetase</fullName>
        <shortName evidence="1">CysRS</shortName>
    </alternativeName>
</protein>
<reference key="1">
    <citation type="journal article" date="2006" name="PLoS Biol.">
        <title>The genome of deep-sea vent chemolithoautotroph Thiomicrospira crunogena XCL-2.</title>
        <authorList>
            <person name="Scott K.M."/>
            <person name="Sievert S.M."/>
            <person name="Abril F.N."/>
            <person name="Ball L.A."/>
            <person name="Barrett C.J."/>
            <person name="Blake R.A."/>
            <person name="Boller A.J."/>
            <person name="Chain P.S.G."/>
            <person name="Clark J.A."/>
            <person name="Davis C.R."/>
            <person name="Detter C."/>
            <person name="Do K.F."/>
            <person name="Dobrinski K.P."/>
            <person name="Faza B.I."/>
            <person name="Fitzpatrick K.A."/>
            <person name="Freyermuth S.K."/>
            <person name="Harmer T.L."/>
            <person name="Hauser L.J."/>
            <person name="Huegler M."/>
            <person name="Kerfeld C.A."/>
            <person name="Klotz M.G."/>
            <person name="Kong W.W."/>
            <person name="Land M."/>
            <person name="Lapidus A."/>
            <person name="Larimer F.W."/>
            <person name="Longo D.L."/>
            <person name="Lucas S."/>
            <person name="Malfatti S.A."/>
            <person name="Massey S.E."/>
            <person name="Martin D.D."/>
            <person name="McCuddin Z."/>
            <person name="Meyer F."/>
            <person name="Moore J.L."/>
            <person name="Ocampo L.H. Jr."/>
            <person name="Paul J.H."/>
            <person name="Paulsen I.T."/>
            <person name="Reep D.K."/>
            <person name="Ren Q."/>
            <person name="Ross R.L."/>
            <person name="Sato P.Y."/>
            <person name="Thomas P."/>
            <person name="Tinkham L.E."/>
            <person name="Zeruth G.T."/>
        </authorList>
    </citation>
    <scope>NUCLEOTIDE SEQUENCE [LARGE SCALE GENOMIC DNA]</scope>
    <source>
        <strain>DSM 25203 / XCL-2</strain>
    </source>
</reference>
<gene>
    <name evidence="1" type="primary">cysS</name>
    <name type="ordered locus">Tcr_0923</name>
</gene>
<proteinExistence type="inferred from homology"/>
<sequence length="456" mass="51697">MALKIYNTETRQKETFTPIQPNKVGLYVCGVTVYDYCHVGHARVMVVFDTVVRHLRSLGYDVTYVRNITDIDDKIIQRALENKESIQSLTSRFIDAMHEDEKALNVLRPDMEPKATEYMDEIETMISTLIEKDFAYPAENGDVYFHVKADDDYGRLSGKNIEELDSGSRVEINSVKKDPLDFVLWKASKENEPAWQSPWGDGRPGWHIECSAMSTKCLGNHFDIHGGGLDLSFPHHENEIAQSECATGEHYVNSWMHCGFVRIDDEKMSKSLGNFFTIREVLKQYHPEVIRYFLLASHYRSPVNYSEENLDVAKASVGRLYSALELVPADQAEPAESKLEAEFMAAMNDDFNTPQAMAVLFELAKEVNKQKSPGLAALLKKLANQIGLLEQTAESFFKSQPSDSDLTDEMIEALIVERAEARKAKDFSRSDEIRDELLAQGIELLDSAEGTSWRKI</sequence>
<organism>
    <name type="scientific">Hydrogenovibrio crunogenus (strain DSM 25203 / XCL-2)</name>
    <name type="common">Thiomicrospira crunogena</name>
    <dbReference type="NCBI Taxonomy" id="317025"/>
    <lineage>
        <taxon>Bacteria</taxon>
        <taxon>Pseudomonadati</taxon>
        <taxon>Pseudomonadota</taxon>
        <taxon>Gammaproteobacteria</taxon>
        <taxon>Thiotrichales</taxon>
        <taxon>Piscirickettsiaceae</taxon>
        <taxon>Hydrogenovibrio</taxon>
    </lineage>
</organism>
<name>SYC_HYDCU</name>
<accession>Q31H54</accession>
<keyword id="KW-0030">Aminoacyl-tRNA synthetase</keyword>
<keyword id="KW-0067">ATP-binding</keyword>
<keyword id="KW-0963">Cytoplasm</keyword>
<keyword id="KW-0436">Ligase</keyword>
<keyword id="KW-0479">Metal-binding</keyword>
<keyword id="KW-0547">Nucleotide-binding</keyword>
<keyword id="KW-0648">Protein biosynthesis</keyword>
<keyword id="KW-0862">Zinc</keyword>
<feature type="chain" id="PRO_0000240971" description="Cysteine--tRNA ligase">
    <location>
        <begin position="1"/>
        <end position="456"/>
    </location>
</feature>
<feature type="short sequence motif" description="'HIGH' region">
    <location>
        <begin position="31"/>
        <end position="41"/>
    </location>
</feature>
<feature type="short sequence motif" description="'KMSKS' region">
    <location>
        <begin position="267"/>
        <end position="271"/>
    </location>
</feature>
<feature type="binding site" evidence="1">
    <location>
        <position position="29"/>
    </location>
    <ligand>
        <name>Zn(2+)</name>
        <dbReference type="ChEBI" id="CHEBI:29105"/>
    </ligand>
</feature>
<feature type="binding site" evidence="1">
    <location>
        <position position="210"/>
    </location>
    <ligand>
        <name>Zn(2+)</name>
        <dbReference type="ChEBI" id="CHEBI:29105"/>
    </ligand>
</feature>
<feature type="binding site" evidence="1">
    <location>
        <position position="235"/>
    </location>
    <ligand>
        <name>Zn(2+)</name>
        <dbReference type="ChEBI" id="CHEBI:29105"/>
    </ligand>
</feature>
<feature type="binding site" evidence="1">
    <location>
        <position position="239"/>
    </location>
    <ligand>
        <name>Zn(2+)</name>
        <dbReference type="ChEBI" id="CHEBI:29105"/>
    </ligand>
</feature>
<feature type="binding site" evidence="1">
    <location>
        <position position="270"/>
    </location>
    <ligand>
        <name>ATP</name>
        <dbReference type="ChEBI" id="CHEBI:30616"/>
    </ligand>
</feature>